<dbReference type="EC" id="2.3.1.274" evidence="1"/>
<dbReference type="EMBL" id="CP000828">
    <property type="protein sequence ID" value="ABW25700.1"/>
    <property type="molecule type" value="Genomic_DNA"/>
</dbReference>
<dbReference type="RefSeq" id="WP_012161295.1">
    <property type="nucleotide sequence ID" value="NC_009925.1"/>
</dbReference>
<dbReference type="SMR" id="B0CE66"/>
<dbReference type="STRING" id="329726.AM1_0652"/>
<dbReference type="KEGG" id="amr:AM1_0652"/>
<dbReference type="eggNOG" id="COG0416">
    <property type="taxonomic scope" value="Bacteria"/>
</dbReference>
<dbReference type="HOGENOM" id="CLU_039379_1_1_3"/>
<dbReference type="OrthoDB" id="9806408at2"/>
<dbReference type="UniPathway" id="UPA00085"/>
<dbReference type="Proteomes" id="UP000000268">
    <property type="component" value="Chromosome"/>
</dbReference>
<dbReference type="GO" id="GO:0005737">
    <property type="term" value="C:cytoplasm"/>
    <property type="evidence" value="ECO:0007669"/>
    <property type="project" value="UniProtKB-SubCell"/>
</dbReference>
<dbReference type="GO" id="GO:0043811">
    <property type="term" value="F:phosphate:acyl-[acyl carrier protein] acyltransferase activity"/>
    <property type="evidence" value="ECO:0007669"/>
    <property type="project" value="UniProtKB-UniRule"/>
</dbReference>
<dbReference type="GO" id="GO:0006633">
    <property type="term" value="P:fatty acid biosynthetic process"/>
    <property type="evidence" value="ECO:0007669"/>
    <property type="project" value="UniProtKB-UniRule"/>
</dbReference>
<dbReference type="GO" id="GO:0008654">
    <property type="term" value="P:phospholipid biosynthetic process"/>
    <property type="evidence" value="ECO:0007669"/>
    <property type="project" value="UniProtKB-KW"/>
</dbReference>
<dbReference type="Gene3D" id="3.40.718.10">
    <property type="entry name" value="Isopropylmalate Dehydrogenase"/>
    <property type="match status" value="1"/>
</dbReference>
<dbReference type="HAMAP" id="MF_00019">
    <property type="entry name" value="PlsX"/>
    <property type="match status" value="1"/>
</dbReference>
<dbReference type="InterPro" id="IPR003664">
    <property type="entry name" value="FA_synthesis"/>
</dbReference>
<dbReference type="InterPro" id="IPR012281">
    <property type="entry name" value="Phospholipid_synth_PlsX-like"/>
</dbReference>
<dbReference type="NCBIfam" id="TIGR00182">
    <property type="entry name" value="plsX"/>
    <property type="match status" value="1"/>
</dbReference>
<dbReference type="PANTHER" id="PTHR30100">
    <property type="entry name" value="FATTY ACID/PHOSPHOLIPID SYNTHESIS PROTEIN PLSX"/>
    <property type="match status" value="1"/>
</dbReference>
<dbReference type="PANTHER" id="PTHR30100:SF1">
    <property type="entry name" value="PHOSPHATE ACYLTRANSFERASE"/>
    <property type="match status" value="1"/>
</dbReference>
<dbReference type="Pfam" id="PF02504">
    <property type="entry name" value="FA_synthesis"/>
    <property type="match status" value="1"/>
</dbReference>
<dbReference type="PIRSF" id="PIRSF002465">
    <property type="entry name" value="Phsphlp_syn_PlsX"/>
    <property type="match status" value="1"/>
</dbReference>
<dbReference type="SUPFAM" id="SSF53659">
    <property type="entry name" value="Isocitrate/Isopropylmalate dehydrogenase-like"/>
    <property type="match status" value="1"/>
</dbReference>
<reference key="1">
    <citation type="journal article" date="2008" name="Proc. Natl. Acad. Sci. U.S.A.">
        <title>Niche adaptation and genome expansion in the chlorophyll d-producing cyanobacterium Acaryochloris marina.</title>
        <authorList>
            <person name="Swingley W.D."/>
            <person name="Chen M."/>
            <person name="Cheung P.C."/>
            <person name="Conrad A.L."/>
            <person name="Dejesa L.C."/>
            <person name="Hao J."/>
            <person name="Honchak B.M."/>
            <person name="Karbach L.E."/>
            <person name="Kurdoglu A."/>
            <person name="Lahiri S."/>
            <person name="Mastrian S.D."/>
            <person name="Miyashita H."/>
            <person name="Page L."/>
            <person name="Ramakrishna P."/>
            <person name="Satoh S."/>
            <person name="Sattley W.M."/>
            <person name="Shimada Y."/>
            <person name="Taylor H.L."/>
            <person name="Tomo T."/>
            <person name="Tsuchiya T."/>
            <person name="Wang Z.T."/>
            <person name="Raymond J."/>
            <person name="Mimuro M."/>
            <person name="Blankenship R.E."/>
            <person name="Touchman J.W."/>
        </authorList>
    </citation>
    <scope>NUCLEOTIDE SEQUENCE [LARGE SCALE GENOMIC DNA]</scope>
    <source>
        <strain>MBIC 11017</strain>
    </source>
</reference>
<proteinExistence type="inferred from homology"/>
<gene>
    <name evidence="1" type="primary">plsX</name>
    <name type="ordered locus">AM1_0652</name>
</gene>
<evidence type="ECO:0000255" key="1">
    <source>
        <dbReference type="HAMAP-Rule" id="MF_00019"/>
    </source>
</evidence>
<keyword id="KW-0963">Cytoplasm</keyword>
<keyword id="KW-0444">Lipid biosynthesis</keyword>
<keyword id="KW-0443">Lipid metabolism</keyword>
<keyword id="KW-0594">Phospholipid biosynthesis</keyword>
<keyword id="KW-1208">Phospholipid metabolism</keyword>
<keyword id="KW-1185">Reference proteome</keyword>
<keyword id="KW-0808">Transferase</keyword>
<name>PLSX_ACAM1</name>
<protein>
    <recommendedName>
        <fullName evidence="1">Phosphate acyltransferase</fullName>
        <ecNumber evidence="1">2.3.1.274</ecNumber>
    </recommendedName>
    <alternativeName>
        <fullName evidence="1">Acyl-ACP phosphotransacylase</fullName>
    </alternativeName>
    <alternativeName>
        <fullName evidence="1">Acyl-[acyl-carrier-protein]--phosphate acyltransferase</fullName>
    </alternativeName>
    <alternativeName>
        <fullName evidence="1">Phosphate-acyl-ACP acyltransferase</fullName>
    </alternativeName>
</protein>
<comment type="function">
    <text evidence="1">Catalyzes the reversible formation of acyl-phosphate (acyl-PO(4)) from acyl-[acyl-carrier-protein] (acyl-ACP). This enzyme utilizes acyl-ACP as fatty acyl donor, but not acyl-CoA.</text>
</comment>
<comment type="catalytic activity">
    <reaction evidence="1">
        <text>a fatty acyl-[ACP] + phosphate = an acyl phosphate + holo-[ACP]</text>
        <dbReference type="Rhea" id="RHEA:42292"/>
        <dbReference type="Rhea" id="RHEA-COMP:9685"/>
        <dbReference type="Rhea" id="RHEA-COMP:14125"/>
        <dbReference type="ChEBI" id="CHEBI:43474"/>
        <dbReference type="ChEBI" id="CHEBI:59918"/>
        <dbReference type="ChEBI" id="CHEBI:64479"/>
        <dbReference type="ChEBI" id="CHEBI:138651"/>
        <dbReference type="EC" id="2.3.1.274"/>
    </reaction>
</comment>
<comment type="pathway">
    <text evidence="1">Lipid metabolism; phospholipid metabolism.</text>
</comment>
<comment type="subunit">
    <text evidence="1">Homodimer. Probably interacts with PlsY.</text>
</comment>
<comment type="subcellular location">
    <subcellularLocation>
        <location evidence="1">Cytoplasm</location>
    </subcellularLocation>
    <text evidence="1">Associated with the membrane possibly through PlsY.</text>
</comment>
<comment type="similarity">
    <text evidence="1">Belongs to the PlsX family.</text>
</comment>
<organism>
    <name type="scientific">Acaryochloris marina (strain MBIC 11017)</name>
    <dbReference type="NCBI Taxonomy" id="329726"/>
    <lineage>
        <taxon>Bacteria</taxon>
        <taxon>Bacillati</taxon>
        <taxon>Cyanobacteriota</taxon>
        <taxon>Cyanophyceae</taxon>
        <taxon>Acaryochloridales</taxon>
        <taxon>Acaryochloridaceae</taxon>
        <taxon>Acaryochloris</taxon>
    </lineage>
</organism>
<sequence length="344" mass="36304">MGATRARIAIDAMGGDHAPDEIVAGALRAQAELDADVLLVGDPDRLEASIKSHSDSVPVEIIPSEGLIEMNEEPISALRRKRKASINVAMDLVKKKKADAVVSAGHSGAAMAAALLRLGRIPGIDRPAIGGVFPTIIAGKPVLVLDVGANVDCRPAFLDQFATMGTIYSEYVLGTEAPKVGLLNIGEESCKGNEVSVQTYQLLEQNPHVDFIGNAEGRDVLSGQFDVIVCDGFTGNILLKFAEAVGEVALQILREELPRGIHGKVGTGILKPNLRRIKQRMDHAEHGGGLLLGVAGVCIISHGSSQAPSIFNAIRLAKEAADNQVSQRIQSCYQQTVTAASNGE</sequence>
<accession>B0CE66</accession>
<feature type="chain" id="PRO_1000074155" description="Phosphate acyltransferase">
    <location>
        <begin position="1"/>
        <end position="344"/>
    </location>
</feature>